<dbReference type="EC" id="3.1.1.22" evidence="1"/>
<dbReference type="EMBL" id="CP000512">
    <property type="protein sequence ID" value="ABM33572.1"/>
    <property type="status" value="ALT_INIT"/>
    <property type="molecule type" value="Genomic_DNA"/>
</dbReference>
<dbReference type="RefSeq" id="WP_041827498.1">
    <property type="nucleotide sequence ID" value="NC_008752.1"/>
</dbReference>
<dbReference type="STRING" id="397945.Aave_3005"/>
<dbReference type="ESTHER" id="aciac-hboh">
    <property type="family name" value="OHBut_olig_hydro_put"/>
</dbReference>
<dbReference type="GeneID" id="79792688"/>
<dbReference type="KEGG" id="aav:Aave_3005"/>
<dbReference type="eggNOG" id="ENOG502Z8QU">
    <property type="taxonomic scope" value="Bacteria"/>
</dbReference>
<dbReference type="HOGENOM" id="CLU_420258_0_0_4"/>
<dbReference type="OrthoDB" id="4294477at2"/>
<dbReference type="UniPathway" id="UPA00863"/>
<dbReference type="Proteomes" id="UP000002596">
    <property type="component" value="Chromosome"/>
</dbReference>
<dbReference type="GO" id="GO:0005615">
    <property type="term" value="C:extracellular space"/>
    <property type="evidence" value="ECO:0007669"/>
    <property type="project" value="InterPro"/>
</dbReference>
<dbReference type="GO" id="GO:0047989">
    <property type="term" value="F:hydroxybutyrate-dimer hydrolase activity"/>
    <property type="evidence" value="ECO:0007669"/>
    <property type="project" value="UniProtKB-UniRule"/>
</dbReference>
<dbReference type="GO" id="GO:0019605">
    <property type="term" value="P:butyrate metabolic process"/>
    <property type="evidence" value="ECO:0007669"/>
    <property type="project" value="UniProtKB-UniRule"/>
</dbReference>
<dbReference type="HAMAP" id="MF_01906">
    <property type="entry name" value="3HBOH"/>
    <property type="match status" value="1"/>
</dbReference>
<dbReference type="InterPro" id="IPR016582">
    <property type="entry name" value="OHBut_olig_hydro_put"/>
</dbReference>
<dbReference type="Pfam" id="PF10605">
    <property type="entry name" value="3HBOH"/>
    <property type="match status" value="1"/>
</dbReference>
<dbReference type="PIRSF" id="PIRSF011409">
    <property type="entry name" value="HObutyrate_olig_hydrol"/>
    <property type="match status" value="1"/>
</dbReference>
<reference key="1">
    <citation type="submission" date="2006-12" db="EMBL/GenBank/DDBJ databases">
        <title>Complete sequence of Acidovorax avenae subsp. citrulli AAC00-1.</title>
        <authorList>
            <person name="Copeland A."/>
            <person name="Lucas S."/>
            <person name="Lapidus A."/>
            <person name="Barry K."/>
            <person name="Detter J.C."/>
            <person name="Glavina del Rio T."/>
            <person name="Dalin E."/>
            <person name="Tice H."/>
            <person name="Pitluck S."/>
            <person name="Kiss H."/>
            <person name="Brettin T."/>
            <person name="Bruce D."/>
            <person name="Han C."/>
            <person name="Tapia R."/>
            <person name="Gilna P."/>
            <person name="Schmutz J."/>
            <person name="Larimer F."/>
            <person name="Land M."/>
            <person name="Hauser L."/>
            <person name="Kyrpides N."/>
            <person name="Kim E."/>
            <person name="Stahl D."/>
            <person name="Richardson P."/>
        </authorList>
    </citation>
    <scope>NUCLEOTIDE SEQUENCE [LARGE SCALE GENOMIC DNA]</scope>
    <source>
        <strain>AAC00-1</strain>
    </source>
</reference>
<comment type="function">
    <text evidence="1">Participates in the degradation of poly-3-hydroxybutyrate (PHB). It works downstream of poly(3-hydroxybutyrate) depolymerase, hydrolyzing D(-)-3-hydroxybutyrate oligomers of various length (3HB-oligomers) into 3HB-monomers.</text>
</comment>
<comment type="catalytic activity">
    <reaction evidence="1">
        <text>(3R)-hydroxybutanoate dimer + H2O = 2 (R)-3-hydroxybutanoate + H(+)</text>
        <dbReference type="Rhea" id="RHEA:10172"/>
        <dbReference type="ChEBI" id="CHEBI:10979"/>
        <dbReference type="ChEBI" id="CHEBI:10983"/>
        <dbReference type="ChEBI" id="CHEBI:15377"/>
        <dbReference type="ChEBI" id="CHEBI:15378"/>
        <dbReference type="EC" id="3.1.1.22"/>
    </reaction>
</comment>
<comment type="pathway">
    <text evidence="1">Lipid metabolism; butanoate metabolism.</text>
</comment>
<comment type="subcellular location">
    <subcellularLocation>
        <location evidence="1">Secreted</location>
    </subcellularLocation>
</comment>
<comment type="similarity">
    <text evidence="1">Belongs to the D-(-)-3-hydroxybutyrate oligomer hydrolase family.</text>
</comment>
<comment type="sequence caution" evidence="3">
    <conflict type="erroneous initiation">
        <sequence resource="EMBL-CDS" id="ABM33572"/>
    </conflict>
</comment>
<feature type="signal peptide" evidence="1">
    <location>
        <begin position="1"/>
        <end position="26"/>
    </location>
</feature>
<feature type="chain" id="PRO_0000314412" description="D-(-)-3-hydroxybutyrate oligomer hydrolase">
    <location>
        <begin position="27"/>
        <end position="709"/>
    </location>
</feature>
<feature type="region of interest" description="Disordered" evidence="2">
    <location>
        <begin position="58"/>
        <end position="77"/>
    </location>
</feature>
<feature type="active site" description="Charge relay system" evidence="1">
    <location>
        <position position="305"/>
    </location>
</feature>
<keyword id="KW-0378">Hydrolase</keyword>
<keyword id="KW-0964">Secreted</keyword>
<keyword id="KW-0732">Signal</keyword>
<organism>
    <name type="scientific">Paracidovorax citrulli (strain AAC00-1)</name>
    <name type="common">Acidovorax citrulli</name>
    <dbReference type="NCBI Taxonomy" id="397945"/>
    <lineage>
        <taxon>Bacteria</taxon>
        <taxon>Pseudomonadati</taxon>
        <taxon>Pseudomonadota</taxon>
        <taxon>Betaproteobacteria</taxon>
        <taxon>Burkholderiales</taxon>
        <taxon>Comamonadaceae</taxon>
        <taxon>Paracidovorax</taxon>
    </lineage>
</organism>
<sequence length="709" mass="72873">MTVFKTAPLLIAALAASSCGGGGSGAAVDYDFNVRPSYLNDLRQASYDGAGNDLLTGGLGRSGLQDDSPPGYAGSQPTAEELRRNAIYVNYRALVDTTSEGGYGRLYGPNVDAQGRATSGEGMVAGTEAIAYSDDGSGRRNVTLMVQVPDAFDRTRPCIITATSSGSRGIYGGIPTGEWGLKRGCAVAYTDKGTGAAPHDLQADTVALIDGTRTSATLAGTRAAFDAGLSAADLAAFNGATPQRLAFKHAHSGQNPEKDWGLSTLQAVEFAFYVLNERFGDRSPGGQALRTFTPANTTVIASSLSNGGGAAIAAAEQDTRGLIDGVAVSEPSVQMPANAGVTVQRGGRTVAVNGLPLIDYTTQAHLYQACAALAPSLASTPFAAAFAVRFADPAFPVAANRCAGLKARGLLSAATTAAQAEEALARLTAYGWEPESGALHASLAAFEVAPSIAVTYANALSRASVQDRLCGYSFATTSAIGAVQPTPAAVTNTLFATGNGIPPTAGVQLVNDRSRGVPVRDLFSSNAAGVPTWNLEGALCLRSLVTGTDAAARRLQSGLDETRRTGNLQGKPAIIVHGRDDALIPVNHTSRPYAALNRRVEGAASRLSYIEVTNAQHFDAFIGLPATLPGYDSRYIPLHLYLNRALDAMYAHLVNGEPLPASQVVRTVPRGGTPGSAPAITAANVPPIAAMPVAADAVAITSGAIAVPD</sequence>
<gene>
    <name type="ordered locus">Aave_3005</name>
</gene>
<proteinExistence type="inferred from homology"/>
<protein>
    <recommendedName>
        <fullName evidence="1">D-(-)-3-hydroxybutyrate oligomer hydrolase</fullName>
        <shortName evidence="1">3HB-oligomer hydrolase</shortName>
        <shortName evidence="1">3HBOH</shortName>
        <ecNumber evidence="1">3.1.1.22</ecNumber>
    </recommendedName>
</protein>
<accession>A1TRI4</accession>
<evidence type="ECO:0000255" key="1">
    <source>
        <dbReference type="HAMAP-Rule" id="MF_01906"/>
    </source>
</evidence>
<evidence type="ECO:0000256" key="2">
    <source>
        <dbReference type="SAM" id="MobiDB-lite"/>
    </source>
</evidence>
<evidence type="ECO:0000305" key="3"/>
<name>HBOH_PARC0</name>